<name>TTK_DANRE</name>
<protein>
    <recommendedName>
        <fullName>Dual specificity protein kinase Ttk</fullName>
        <ecNumber>2.7.12.1</ecNumber>
    </recommendedName>
    <alternativeName>
        <fullName>Mitotic checkpoint serine/threonine-protein kinase Mps1</fullName>
    </alternativeName>
    <alternativeName>
        <fullName>Monopolar spindle protein 1</fullName>
    </alternativeName>
    <alternativeName>
        <fullName>Protein nightcap</fullName>
    </alternativeName>
</protein>
<gene>
    <name type="primary">ttk</name>
    <name type="synonym">mps1</name>
    <name evidence="9" type="synonym">ncp</name>
</gene>
<feature type="chain" id="PRO_0000086390" description="Dual specificity protein kinase Ttk">
    <location>
        <begin position="1"/>
        <end position="982"/>
    </location>
</feature>
<feature type="domain" description="Protein kinase" evidence="3">
    <location>
        <begin position="653"/>
        <end position="916"/>
    </location>
</feature>
<feature type="region of interest" description="Disordered" evidence="5">
    <location>
        <begin position="178"/>
        <end position="204"/>
    </location>
</feature>
<feature type="region of interest" description="Disordered" evidence="5">
    <location>
        <begin position="211"/>
        <end position="230"/>
    </location>
</feature>
<feature type="region of interest" description="Disordered" evidence="5">
    <location>
        <begin position="493"/>
        <end position="574"/>
    </location>
</feature>
<feature type="compositionally biased region" description="Polar residues" evidence="5">
    <location>
        <begin position="211"/>
        <end position="223"/>
    </location>
</feature>
<feature type="compositionally biased region" description="Basic and acidic residues" evidence="5">
    <location>
        <begin position="510"/>
        <end position="533"/>
    </location>
</feature>
<feature type="active site" description="Proton acceptor" evidence="3 4">
    <location>
        <position position="775"/>
    </location>
</feature>
<feature type="binding site" evidence="3">
    <location>
        <begin position="659"/>
        <end position="667"/>
    </location>
    <ligand>
        <name>ATP</name>
        <dbReference type="ChEBI" id="CHEBI:30616"/>
    </ligand>
</feature>
<feature type="binding site" evidence="3">
    <location>
        <position position="681"/>
    </location>
    <ligand>
        <name>ATP</name>
        <dbReference type="ChEBI" id="CHEBI:30616"/>
    </ligand>
</feature>
<feature type="mutagenesis site" description="In zp1; temperature-sensitive mutation that blocks fin regeneration at the restrictive temperature." evidence="6">
    <original>I</original>
    <variation>K</variation>
    <location>
        <position position="783"/>
    </location>
</feature>
<feature type="sequence conflict" description="In Ref. 1; AAN61408." evidence="10" ref="1">
    <original>N</original>
    <variation>S</variation>
    <location>
        <position position="210"/>
    </location>
</feature>
<feature type="sequence conflict" description="In Ref. 1; AAN61408." evidence="10" ref="1">
    <original>S</original>
    <variation>SS</variation>
    <location>
        <position position="215"/>
    </location>
</feature>
<feature type="sequence conflict" description="In Ref. 1; AAN61408." evidence="10" ref="1">
    <original>EH</original>
    <variation>DL</variation>
    <location>
        <begin position="494"/>
        <end position="495"/>
    </location>
</feature>
<feature type="sequence conflict" description="In Ref. 1; AAN61408." evidence="10" ref="1">
    <original>GM</original>
    <variation>YI</variation>
    <location>
        <begin position="509"/>
        <end position="510"/>
    </location>
</feature>
<feature type="sequence conflict" description="In Ref. 1; AAN61408." evidence="10" ref="1">
    <original>PV</original>
    <variation>SA</variation>
    <location>
        <begin position="516"/>
        <end position="517"/>
    </location>
</feature>
<feature type="sequence conflict" description="In Ref. 1; AAN61408." evidence="10" ref="1">
    <original>PV</original>
    <variation>SL</variation>
    <location>
        <begin position="553"/>
        <end position="554"/>
    </location>
</feature>
<dbReference type="EC" id="2.7.12.1"/>
<dbReference type="EMBL" id="AF488735">
    <property type="protein sequence ID" value="AAN61408.1"/>
    <property type="molecule type" value="mRNA"/>
</dbReference>
<dbReference type="EMBL" id="BC054627">
    <property type="protein sequence ID" value="AAH54627.1"/>
    <property type="molecule type" value="mRNA"/>
</dbReference>
<dbReference type="RefSeq" id="NP_778207.1">
    <property type="nucleotide sequence ID" value="NM_175042.2"/>
</dbReference>
<dbReference type="SMR" id="Q8AYG3"/>
<dbReference type="FunCoup" id="Q8AYG3">
    <property type="interactions" value="2564"/>
</dbReference>
<dbReference type="STRING" id="7955.ENSDARP00000121369"/>
<dbReference type="PaxDb" id="7955-ENSDARP00000121369"/>
<dbReference type="GeneID" id="317763"/>
<dbReference type="KEGG" id="dre:317763"/>
<dbReference type="AGR" id="ZFIN:ZDB-GENE-030123-1"/>
<dbReference type="CTD" id="7272"/>
<dbReference type="ZFIN" id="ZDB-GENE-030123-1">
    <property type="gene designation" value="ttk"/>
</dbReference>
<dbReference type="eggNOG" id="KOG0596">
    <property type="taxonomic scope" value="Eukaryota"/>
</dbReference>
<dbReference type="InParanoid" id="Q8AYG3"/>
<dbReference type="OrthoDB" id="20524at2759"/>
<dbReference type="PhylomeDB" id="Q8AYG3"/>
<dbReference type="PRO" id="PR:Q8AYG3"/>
<dbReference type="Proteomes" id="UP000000437">
    <property type="component" value="Chromosome 16"/>
</dbReference>
<dbReference type="GO" id="GO:0000776">
    <property type="term" value="C:kinetochore"/>
    <property type="evidence" value="ECO:0000318"/>
    <property type="project" value="GO_Central"/>
</dbReference>
<dbReference type="GO" id="GO:0005634">
    <property type="term" value="C:nucleus"/>
    <property type="evidence" value="ECO:0000318"/>
    <property type="project" value="GO_Central"/>
</dbReference>
<dbReference type="GO" id="GO:0005524">
    <property type="term" value="F:ATP binding"/>
    <property type="evidence" value="ECO:0007669"/>
    <property type="project" value="UniProtKB-KW"/>
</dbReference>
<dbReference type="GO" id="GO:0046872">
    <property type="term" value="F:metal ion binding"/>
    <property type="evidence" value="ECO:0007669"/>
    <property type="project" value="UniProtKB-KW"/>
</dbReference>
<dbReference type="GO" id="GO:0106310">
    <property type="term" value="F:protein serine kinase activity"/>
    <property type="evidence" value="ECO:0007669"/>
    <property type="project" value="RHEA"/>
</dbReference>
<dbReference type="GO" id="GO:0004674">
    <property type="term" value="F:protein serine/threonine kinase activity"/>
    <property type="evidence" value="ECO:0000318"/>
    <property type="project" value="GO_Central"/>
</dbReference>
<dbReference type="GO" id="GO:0004712">
    <property type="term" value="F:protein serine/threonine/tyrosine kinase activity"/>
    <property type="evidence" value="ECO:0000318"/>
    <property type="project" value="GO_Central"/>
</dbReference>
<dbReference type="GO" id="GO:0004713">
    <property type="term" value="F:protein tyrosine kinase activity"/>
    <property type="evidence" value="ECO:0007669"/>
    <property type="project" value="UniProtKB-KW"/>
</dbReference>
<dbReference type="GO" id="GO:0060249">
    <property type="term" value="P:anatomical structure homeostasis"/>
    <property type="evidence" value="ECO:0000315"/>
    <property type="project" value="ZFIN"/>
</dbReference>
<dbReference type="GO" id="GO:0051301">
    <property type="term" value="P:cell division"/>
    <property type="evidence" value="ECO:0007669"/>
    <property type="project" value="UniProtKB-KW"/>
</dbReference>
<dbReference type="GO" id="GO:0007059">
    <property type="term" value="P:chromosome segregation"/>
    <property type="evidence" value="ECO:0000318"/>
    <property type="project" value="GO_Central"/>
</dbReference>
<dbReference type="GO" id="GO:0016321">
    <property type="term" value="P:female meiosis chromosome segregation"/>
    <property type="evidence" value="ECO:0000315"/>
    <property type="project" value="ZFIN"/>
</dbReference>
<dbReference type="GO" id="GO:0031101">
    <property type="term" value="P:fin regeneration"/>
    <property type="evidence" value="ECO:0000315"/>
    <property type="project" value="ZFIN"/>
</dbReference>
<dbReference type="GO" id="GO:0007060">
    <property type="term" value="P:male meiosis chromosome segregation"/>
    <property type="evidence" value="ECO:0000315"/>
    <property type="project" value="ZFIN"/>
</dbReference>
<dbReference type="GO" id="GO:0033316">
    <property type="term" value="P:meiotic spindle assembly checkpoint signaling"/>
    <property type="evidence" value="ECO:0000318"/>
    <property type="project" value="GO_Central"/>
</dbReference>
<dbReference type="GO" id="GO:0007094">
    <property type="term" value="P:mitotic spindle assembly checkpoint signaling"/>
    <property type="evidence" value="ECO:0000318"/>
    <property type="project" value="GO_Central"/>
</dbReference>
<dbReference type="GO" id="GO:0001100">
    <property type="term" value="P:negative regulation of exit from mitosis"/>
    <property type="evidence" value="ECO:0000315"/>
    <property type="project" value="UniProtKB"/>
</dbReference>
<dbReference type="GO" id="GO:0034501">
    <property type="term" value="P:protein localization to kinetochore"/>
    <property type="evidence" value="ECO:0000318"/>
    <property type="project" value="GO_Central"/>
</dbReference>
<dbReference type="GO" id="GO:0042246">
    <property type="term" value="P:tissue regeneration"/>
    <property type="evidence" value="ECO:0000315"/>
    <property type="project" value="UniProtKB"/>
</dbReference>
<dbReference type="CDD" id="cd14131">
    <property type="entry name" value="PKc_Mps1"/>
    <property type="match status" value="1"/>
</dbReference>
<dbReference type="FunFam" id="1.10.510.10:FF:000308">
    <property type="entry name" value="Dual specificity protein kinase TTK"/>
    <property type="match status" value="1"/>
</dbReference>
<dbReference type="FunFam" id="1.25.40.10:FF:000101">
    <property type="entry name" value="Dual specificity protein kinase TTK"/>
    <property type="match status" value="2"/>
</dbReference>
<dbReference type="FunFam" id="3.30.200.20:FF:000131">
    <property type="entry name" value="Dual specificity protein kinase TTK"/>
    <property type="match status" value="1"/>
</dbReference>
<dbReference type="Gene3D" id="3.30.200.20">
    <property type="entry name" value="Phosphorylase Kinase, domain 1"/>
    <property type="match status" value="1"/>
</dbReference>
<dbReference type="Gene3D" id="1.25.40.10">
    <property type="entry name" value="Tetratricopeptide repeat domain"/>
    <property type="match status" value="2"/>
</dbReference>
<dbReference type="Gene3D" id="1.10.510.10">
    <property type="entry name" value="Transferase(Phosphotransferase) domain 1"/>
    <property type="match status" value="1"/>
</dbReference>
<dbReference type="InterPro" id="IPR011009">
    <property type="entry name" value="Kinase-like_dom_sf"/>
</dbReference>
<dbReference type="InterPro" id="IPR027084">
    <property type="entry name" value="Mps1_cat"/>
</dbReference>
<dbReference type="InterPro" id="IPR000719">
    <property type="entry name" value="Prot_kinase_dom"/>
</dbReference>
<dbReference type="InterPro" id="IPR017441">
    <property type="entry name" value="Protein_kinase_ATP_BS"/>
</dbReference>
<dbReference type="InterPro" id="IPR008271">
    <property type="entry name" value="Ser/Thr_kinase_AS"/>
</dbReference>
<dbReference type="InterPro" id="IPR011990">
    <property type="entry name" value="TPR-like_helical_dom_sf"/>
</dbReference>
<dbReference type="PANTHER" id="PTHR22974:SF21">
    <property type="entry name" value="DUAL SPECIFICITY PROTEIN KINASE TTK"/>
    <property type="match status" value="1"/>
</dbReference>
<dbReference type="PANTHER" id="PTHR22974">
    <property type="entry name" value="MIXED LINEAGE PROTEIN KINASE"/>
    <property type="match status" value="1"/>
</dbReference>
<dbReference type="Pfam" id="PF00069">
    <property type="entry name" value="Pkinase"/>
    <property type="match status" value="1"/>
</dbReference>
<dbReference type="SMART" id="SM00220">
    <property type="entry name" value="S_TKc"/>
    <property type="match status" value="1"/>
</dbReference>
<dbReference type="SUPFAM" id="SSF56112">
    <property type="entry name" value="Protein kinase-like (PK-like)"/>
    <property type="match status" value="1"/>
</dbReference>
<dbReference type="PROSITE" id="PS00107">
    <property type="entry name" value="PROTEIN_KINASE_ATP"/>
    <property type="match status" value="1"/>
</dbReference>
<dbReference type="PROSITE" id="PS50011">
    <property type="entry name" value="PROTEIN_KINASE_DOM"/>
    <property type="match status" value="1"/>
</dbReference>
<dbReference type="PROSITE" id="PS00108">
    <property type="entry name" value="PROTEIN_KINASE_ST"/>
    <property type="match status" value="1"/>
</dbReference>
<evidence type="ECO:0000250" key="1">
    <source>
        <dbReference type="UniProtKB" id="P33981"/>
    </source>
</evidence>
<evidence type="ECO:0000250" key="2">
    <source>
        <dbReference type="UniProtKB" id="Q86UE8"/>
    </source>
</evidence>
<evidence type="ECO:0000255" key="3">
    <source>
        <dbReference type="PROSITE-ProRule" id="PRU00159"/>
    </source>
</evidence>
<evidence type="ECO:0000255" key="4">
    <source>
        <dbReference type="PROSITE-ProRule" id="PRU10027"/>
    </source>
</evidence>
<evidence type="ECO:0000256" key="5">
    <source>
        <dbReference type="SAM" id="MobiDB-lite"/>
    </source>
</evidence>
<evidence type="ECO:0000269" key="6">
    <source>
    </source>
</evidence>
<evidence type="ECO:0000269" key="7">
    <source>
    </source>
</evidence>
<evidence type="ECO:0000269" key="8">
    <source>
    </source>
</evidence>
<evidence type="ECO:0000303" key="9">
    <source>
    </source>
</evidence>
<evidence type="ECO:0000305" key="10"/>
<evidence type="ECO:0000312" key="11">
    <source>
        <dbReference type="EMBL" id="AAH54627.1"/>
    </source>
</evidence>
<evidence type="ECO:0000312" key="12">
    <source>
        <dbReference type="EMBL" id="AAN61408.1"/>
    </source>
</evidence>
<proteinExistence type="evidence at protein level"/>
<keyword id="KW-0067">ATP-binding</keyword>
<keyword id="KW-0131">Cell cycle</keyword>
<keyword id="KW-0132">Cell division</keyword>
<keyword id="KW-0418">Kinase</keyword>
<keyword id="KW-0460">Magnesium</keyword>
<keyword id="KW-0479">Metal-binding</keyword>
<keyword id="KW-0547">Nucleotide-binding</keyword>
<keyword id="KW-1185">Reference proteome</keyword>
<keyword id="KW-0723">Serine/threonine-protein kinase</keyword>
<keyword id="KW-0808">Transferase</keyword>
<keyword id="KW-0829">Tyrosine-protein kinase</keyword>
<reference evidence="10 12" key="1">
    <citation type="journal article" date="2002" name="Development">
        <title>Mps1 defines a proximal blastemal proliferative compartment essential for zebrafish fin regeneration.</title>
        <authorList>
            <person name="Poss K.D."/>
            <person name="Nechiporuk A."/>
            <person name="Hillam A.M."/>
            <person name="Johnson S.L."/>
            <person name="Keating M.T."/>
        </authorList>
    </citation>
    <scope>NUCLEOTIDE SEQUENCE [MRNA]</scope>
    <scope>FUNCTION</scope>
    <scope>TISSUE SPECIFICITY</scope>
    <scope>INDUCTION</scope>
    <scope>MUTAGENESIS OF ILE-783</scope>
    <source>
        <strain evidence="6">AB</strain>
    </source>
</reference>
<reference evidence="10 11" key="2">
    <citation type="submission" date="2003-07" db="EMBL/GenBank/DDBJ databases">
        <authorList>
            <consortium name="NIH - Zebrafish Gene Collection (ZGC) project"/>
        </authorList>
    </citation>
    <scope>NUCLEOTIDE SEQUENCE [LARGE SCALE MRNA]</scope>
    <source>
        <tissue evidence="11">Kidney</tissue>
    </source>
</reference>
<reference key="3">
    <citation type="journal article" date="2002" name="Science">
        <title>Heart regeneration in zebrafish.</title>
        <authorList>
            <person name="Poss K.D."/>
            <person name="Wilson L.G."/>
            <person name="Keating M.T."/>
        </authorList>
    </citation>
    <scope>FUNCTION</scope>
</reference>
<reference key="4">
    <citation type="journal article" date="2004" name="Genes Dev.">
        <title>Germ cell aneuploidy in zebrafish with mutations in the mitotic checkpoint gene mps1.</title>
        <authorList>
            <person name="Poss K.D."/>
            <person name="Nechiporuk A."/>
            <person name="Stringer K.F."/>
            <person name="Lee C."/>
            <person name="Keating M.T."/>
        </authorList>
    </citation>
    <scope>FUNCTION</scope>
    <scope>TISSUE SPECIFICITY</scope>
    <scope>DISRUPTION PHENOTYPE</scope>
</reference>
<accession>Q8AYG3</accession>
<accession>Q7T2A4</accession>
<organism>
    <name type="scientific">Danio rerio</name>
    <name type="common">Zebrafish</name>
    <name type="synonym">Brachydanio rerio</name>
    <dbReference type="NCBI Taxonomy" id="7955"/>
    <lineage>
        <taxon>Eukaryota</taxon>
        <taxon>Metazoa</taxon>
        <taxon>Chordata</taxon>
        <taxon>Craniata</taxon>
        <taxon>Vertebrata</taxon>
        <taxon>Euteleostomi</taxon>
        <taxon>Actinopterygii</taxon>
        <taxon>Neopterygii</taxon>
        <taxon>Teleostei</taxon>
        <taxon>Ostariophysi</taxon>
        <taxon>Cypriniformes</taxon>
        <taxon>Danionidae</taxon>
        <taxon>Danioninae</taxon>
        <taxon>Danio</taxon>
    </lineage>
</organism>
<comment type="function">
    <text evidence="1 6 7 8">Involved in mitotic spindle assembly checkpoint signaling, a process that delays anaphase until chromosomes are bioriented on the spindle, and in the repair of incorrect mitotic kinetochore-spindle microtubule attachments (By similarity). Required to prevent chromosome segregation errors during meiosis (PubMed:15231734). Required for fin and heart regeneration (PubMed:12399306, PubMed:12481136).</text>
</comment>
<comment type="catalytic activity">
    <reaction evidence="1">
        <text>L-seryl-[protein] + ATP = O-phospho-L-seryl-[protein] + ADP + H(+)</text>
        <dbReference type="Rhea" id="RHEA:17989"/>
        <dbReference type="Rhea" id="RHEA-COMP:9863"/>
        <dbReference type="Rhea" id="RHEA-COMP:11604"/>
        <dbReference type="ChEBI" id="CHEBI:15378"/>
        <dbReference type="ChEBI" id="CHEBI:29999"/>
        <dbReference type="ChEBI" id="CHEBI:30616"/>
        <dbReference type="ChEBI" id="CHEBI:83421"/>
        <dbReference type="ChEBI" id="CHEBI:456216"/>
        <dbReference type="EC" id="2.7.12.1"/>
    </reaction>
</comment>
<comment type="catalytic activity">
    <reaction evidence="1">
        <text>L-threonyl-[protein] + ATP = O-phospho-L-threonyl-[protein] + ADP + H(+)</text>
        <dbReference type="Rhea" id="RHEA:46608"/>
        <dbReference type="Rhea" id="RHEA-COMP:11060"/>
        <dbReference type="Rhea" id="RHEA-COMP:11605"/>
        <dbReference type="ChEBI" id="CHEBI:15378"/>
        <dbReference type="ChEBI" id="CHEBI:30013"/>
        <dbReference type="ChEBI" id="CHEBI:30616"/>
        <dbReference type="ChEBI" id="CHEBI:61977"/>
        <dbReference type="ChEBI" id="CHEBI:456216"/>
        <dbReference type="EC" id="2.7.12.1"/>
    </reaction>
</comment>
<comment type="catalytic activity">
    <reaction evidence="1">
        <text>L-tyrosyl-[protein] + ATP = O-phospho-L-tyrosyl-[protein] + ADP + H(+)</text>
        <dbReference type="Rhea" id="RHEA:10596"/>
        <dbReference type="Rhea" id="RHEA-COMP:10136"/>
        <dbReference type="Rhea" id="RHEA-COMP:20101"/>
        <dbReference type="ChEBI" id="CHEBI:15378"/>
        <dbReference type="ChEBI" id="CHEBI:30616"/>
        <dbReference type="ChEBI" id="CHEBI:46858"/>
        <dbReference type="ChEBI" id="CHEBI:61978"/>
        <dbReference type="ChEBI" id="CHEBI:456216"/>
        <dbReference type="EC" id="2.7.12.1"/>
    </reaction>
</comment>
<comment type="cofactor">
    <cofactor evidence="2">
        <name>Mg(2+)</name>
        <dbReference type="ChEBI" id="CHEBI:18420"/>
    </cofactor>
</comment>
<comment type="tissue specificity">
    <text evidence="6 8">Barely detectable in adult somatic tissues. Expressed in immature germ cells that have not completed meiosis. In ovary, expressed predominantly in previtellogenic oocytes. In testis, expressed in primary and secondary spermatocytes, but not mature spermatozoa.</text>
</comment>
<comment type="induction">
    <text evidence="6">Strongly induced in a subpopulation of cells in the proximal blastema during regenerative outgrowth.</text>
</comment>
<comment type="disruption phenotype">
    <text evidence="8">Mutants show anomalies in the chromosome number of male germ cells, leading to aneuploidy and severe developmental defects in their progeny.</text>
</comment>
<comment type="similarity">
    <text evidence="3">Belongs to the protein kinase superfamily. Ser/Thr protein kinase family.</text>
</comment>
<sequence length="982" mass="110012">MDEEESTERQMQIAMLCQKLAMMKQLFNEDDTDYINQAISSNSPDTCRTFLSNLEKKGNPQADPSLLSKLMDSYTRVFSSMPLGKYSQNESYAKMLVRFAELKAIQDVNDAQTSFDIARSHCKDFAFVHVAYAQFELLQGNMKKCTMILQKAFEMNAKPRHVLEAAVRNLKTGKRQLLSHEDKENLSVSALDHTQGSRRSDGTCELKPSNTFLHSDQKFSPQEENGPVWRTGSQHRRTAMAERVPMVPLSIPENETSDSDCAQKAEAPFTHSSGFSRQTSGSSVRSAFSLCSSKKGTPDGDSYSLNIKPPVISPDYLREDIEEGHTITALLNRAEKRETARTEETTDINQIISTNSTEGCQAFLKNLEKRADPHSDAAFLSKLLDCYSKVFARFPLAEHCKTESYARMLVRYAELKGIEDPEDAADDFSIARSHCKAFAFVHIAHAQFELSRGNSRKSVSILQKALSSNARPIELLQTAIRNLKSGKTLLLPAEHQESSEAENVEAQNGMKREENPVKAPEDHQKPFSKETSSEWKIPALITKHTSPEDRKAPVEPVSSSSSHHAVRTPAPLRLNPSLSCQTPNYRQPNPNSFVTPVVKQRPVIVSVPATAQKMCPTALPCTPQSGVSYIQPPTQTPSSAFSNESITIKGKQFFIFKMIGRGGSSKVYQVFDHKKHVYAVKYVNLEEADAQAVESYKNEIEHLNHLQQYSDQIIKLYDYEITSSYIYMLMECGHLDLNTWLRNRKTVKPLDRKAYWRNMLEAVHTIHKHGIVHSDLKPANFLIVDGSLKLIDFGIANQIQPDVTSIMKDSQVGTLNYMPPEAIKDTSSNGKPGSKISAKGDVWSLGCILYCMTYGKTPFQNITNQISKIHAIIDPSHEIDFPDIPEKDLLDVLKKCLVRNPRERISIAELLDHPYLQLQPQPAPEPAETSSSDFKRILNELVALQSPNSIARAASNLAMMCNSGRKLDVSECVKSSSQTLWK</sequence>